<gene>
    <name type="primary">hyou1</name>
    <name evidence="2" type="synonym">hsph4</name>
</gene>
<reference key="1">
    <citation type="submission" date="2005-04" db="EMBL/GenBank/DDBJ databases">
        <authorList>
            <consortium name="NIH - Xenopus Gene Collection (XGC) project"/>
        </authorList>
    </citation>
    <scope>NUCLEOTIDE SEQUENCE [LARGE SCALE MRNA]</scope>
    <source>
        <tissue>Embryo</tissue>
        <tissue>Oocyte</tissue>
    </source>
</reference>
<reference key="2">
    <citation type="journal article" date="2010" name="Proteomics">
        <title>A proteome map of the pituitary melanotrope cell activated by black-background adaptation of Xenopus laevis.</title>
        <authorList>
            <person name="Devreese B."/>
            <person name="Sergeant K."/>
            <person name="Van Bakel N.H."/>
            <person name="Debyser G."/>
            <person name="Van Beeumen J."/>
            <person name="Martens G.J."/>
            <person name="Van Herp F."/>
        </authorList>
    </citation>
    <scope>IDENTIFICATION BY MASS SPECTROMETRY</scope>
</reference>
<organism>
    <name type="scientific">Xenopus laevis</name>
    <name type="common">African clawed frog</name>
    <dbReference type="NCBI Taxonomy" id="8355"/>
    <lineage>
        <taxon>Eukaryota</taxon>
        <taxon>Metazoa</taxon>
        <taxon>Chordata</taxon>
        <taxon>Craniata</taxon>
        <taxon>Vertebrata</taxon>
        <taxon>Euteleostomi</taxon>
        <taxon>Amphibia</taxon>
        <taxon>Batrachia</taxon>
        <taxon>Anura</taxon>
        <taxon>Pipoidea</taxon>
        <taxon>Pipidae</taxon>
        <taxon>Xenopodinae</taxon>
        <taxon>Xenopus</taxon>
        <taxon>Xenopus</taxon>
    </lineage>
</organism>
<feature type="signal peptide" evidence="3">
    <location>
        <begin position="1"/>
        <end position="22"/>
    </location>
</feature>
<feature type="chain" id="PRO_0000379422" description="Hypoxia up-regulated protein 1">
    <location>
        <begin position="23"/>
        <end position="646"/>
    </location>
</feature>
<feature type="region of interest" description="Disordered" evidence="4">
    <location>
        <begin position="572"/>
        <end position="646"/>
    </location>
</feature>
<feature type="compositionally biased region" description="Acidic residues" evidence="4">
    <location>
        <begin position="590"/>
        <end position="610"/>
    </location>
</feature>
<feature type="compositionally biased region" description="Basic and acidic residues" evidence="4">
    <location>
        <begin position="611"/>
        <end position="646"/>
    </location>
</feature>
<feature type="sequence conflict" description="In Ref. 1; AAH43837." evidence="5" ref="1">
    <original>E</original>
    <variation>D</variation>
    <location>
        <position position="603"/>
    </location>
</feature>
<feature type="non-terminal residue">
    <location>
        <position position="646"/>
    </location>
</feature>
<name>HYOU1_XENLA</name>
<comment type="function">
    <text evidence="1">Has a pivotal role in cytoprotective cellular mechanisms triggered by oxygen deprivation. May play a role as a molecular chaperone and participate in protein folding.</text>
</comment>
<comment type="subcellular location">
    <subcellularLocation>
        <location evidence="1">Endoplasmic reticulum lumen</location>
    </subcellularLocation>
</comment>
<comment type="similarity">
    <text evidence="5">Belongs to the heat shock protein 70 family.</text>
</comment>
<evidence type="ECO:0000250" key="1"/>
<evidence type="ECO:0000250" key="2">
    <source>
        <dbReference type="UniProtKB" id="Q9Y4L1"/>
    </source>
</evidence>
<evidence type="ECO:0000255" key="3"/>
<evidence type="ECO:0000256" key="4">
    <source>
        <dbReference type="SAM" id="MobiDB-lite"/>
    </source>
</evidence>
<evidence type="ECO:0000305" key="5"/>
<keyword id="KW-0067">ATP-binding</keyword>
<keyword id="KW-0143">Chaperone</keyword>
<keyword id="KW-0256">Endoplasmic reticulum</keyword>
<keyword id="KW-0547">Nucleotide-binding</keyword>
<keyword id="KW-1185">Reference proteome</keyword>
<keyword id="KW-0732">Signal</keyword>
<accession>Q566I3</accession>
<accession>Q6DCF7</accession>
<accession>Q7ZYD2</accession>
<sequence length="646" mass="72674">MRPLVCVLWMFLFALLSSHTESVAVMSVDLGSEWVKVAIVKPGVPMEIVLNKESRRKTPAAIALKENERLFGENALGMAVKNPKVTFRYFQDLLGKRLDNPQVQAFEARFPEYHLVKDERRETVLFKLSEDLTYSPEELLGMVLNYSRSLAEDFAEQPVKDVVITVPAFFNQAERRAVLQAAQLSGLKVLQLINDNTAVALNYGVFRRKDINATAQNVMFYDMGTRSTICTIVTYQTIKTKDSGTQPQLQIRGVGFDRTLGGLEIDLRLRDHLAKLFNEQKKSKKDVRENQRAMNKLLKEANRVKTILSANNDHMAQIEGLMDDIDFKAKVTRQELEDLCADLFNRVSAPVQQALASAEMKMEEIDQVILVGGATRVPKVQEFLLKVVGKEELSKNINADEAAAMGAVYQAAALSKAFKVKPFIVRDAAIFPIQVEFTREVEEENHSKSLKHNKRILFQRLAPYPQRKVITFNRYTDDFAFSINYGDLSYLGPEDLKVFGSLNLTTVKLNGVGESFQKRSDYESKGIKAHFNMDESGLLTLDRVEAVFETVADEKPELESTLTKLGNTISSLFGGGSSVSETKENVTDSVQEEDEVPTEPTKEEEQESADPADKQQDKENNKEKGTSATNEKEEGKKEEEKAEPQE</sequence>
<dbReference type="EMBL" id="BC043837">
    <property type="protein sequence ID" value="AAH43837.1"/>
    <property type="status" value="ALT_TERM"/>
    <property type="molecule type" value="mRNA"/>
</dbReference>
<dbReference type="EMBL" id="BC078088">
    <property type="protein sequence ID" value="AAH78088.1"/>
    <property type="status" value="ALT_TERM"/>
    <property type="molecule type" value="mRNA"/>
</dbReference>
<dbReference type="EMBL" id="BC093532">
    <property type="protein sequence ID" value="AAH93532.1"/>
    <property type="status" value="ALT_TERM"/>
    <property type="molecule type" value="mRNA"/>
</dbReference>
<dbReference type="SMR" id="Q566I3"/>
<dbReference type="AGR" id="Xenbase:XB-GENE-921831"/>
<dbReference type="Xenbase" id="XB-GENE-921831">
    <property type="gene designation" value="hyou1.S"/>
</dbReference>
<dbReference type="CD-CODE" id="78E86D56">
    <property type="entry name" value="Mitochondrial cloud"/>
</dbReference>
<dbReference type="Proteomes" id="UP000186698">
    <property type="component" value="Unplaced"/>
</dbReference>
<dbReference type="GO" id="GO:0034663">
    <property type="term" value="C:endoplasmic reticulum chaperone complex"/>
    <property type="evidence" value="ECO:0000318"/>
    <property type="project" value="GO_Central"/>
</dbReference>
<dbReference type="GO" id="GO:0005788">
    <property type="term" value="C:endoplasmic reticulum lumen"/>
    <property type="evidence" value="ECO:0007669"/>
    <property type="project" value="UniProtKB-SubCell"/>
</dbReference>
<dbReference type="GO" id="GO:0000774">
    <property type="term" value="F:adenyl-nucleotide exchange factor activity"/>
    <property type="evidence" value="ECO:0000318"/>
    <property type="project" value="GO_Central"/>
</dbReference>
<dbReference type="GO" id="GO:0005524">
    <property type="term" value="F:ATP binding"/>
    <property type="evidence" value="ECO:0007669"/>
    <property type="project" value="UniProtKB-KW"/>
</dbReference>
<dbReference type="GO" id="GO:0140662">
    <property type="term" value="F:ATP-dependent protein folding chaperone"/>
    <property type="evidence" value="ECO:0007669"/>
    <property type="project" value="InterPro"/>
</dbReference>
<dbReference type="GO" id="GO:0030968">
    <property type="term" value="P:endoplasmic reticulum unfolded protein response"/>
    <property type="evidence" value="ECO:0007669"/>
    <property type="project" value="TreeGrafter"/>
</dbReference>
<dbReference type="GO" id="GO:1903298">
    <property type="term" value="P:negative regulation of hypoxia-induced intrinsic apoptotic signaling pathway"/>
    <property type="evidence" value="ECO:0000318"/>
    <property type="project" value="GO_Central"/>
</dbReference>
<dbReference type="CDD" id="cd10230">
    <property type="entry name" value="ASKHA_NBD_HSP70_HYOU1"/>
    <property type="match status" value="1"/>
</dbReference>
<dbReference type="FunFam" id="2.60.34.10:FF:000009">
    <property type="entry name" value="Hypoxia up-regulated protein 1"/>
    <property type="match status" value="1"/>
</dbReference>
<dbReference type="FunFam" id="3.90.640.10:FF:000012">
    <property type="entry name" value="Hypoxia up-regulated protein 1"/>
    <property type="match status" value="1"/>
</dbReference>
<dbReference type="FunFam" id="3.30.30.30:FF:000004">
    <property type="entry name" value="hypoxia up-regulated protein 1"/>
    <property type="match status" value="1"/>
</dbReference>
<dbReference type="Gene3D" id="3.30.30.30">
    <property type="match status" value="1"/>
</dbReference>
<dbReference type="Gene3D" id="3.30.420.40">
    <property type="match status" value="2"/>
</dbReference>
<dbReference type="Gene3D" id="3.90.640.10">
    <property type="entry name" value="Actin, Chain A, domain 4"/>
    <property type="match status" value="1"/>
</dbReference>
<dbReference type="Gene3D" id="2.60.34.10">
    <property type="entry name" value="Substrate Binding Domain Of DNAk, Chain A, domain 1"/>
    <property type="match status" value="1"/>
</dbReference>
<dbReference type="InterPro" id="IPR043129">
    <property type="entry name" value="ATPase_NBD"/>
</dbReference>
<dbReference type="InterPro" id="IPR018181">
    <property type="entry name" value="Heat_shock_70_CS"/>
</dbReference>
<dbReference type="InterPro" id="IPR029047">
    <property type="entry name" value="HSP70_peptide-bd_sf"/>
</dbReference>
<dbReference type="InterPro" id="IPR013126">
    <property type="entry name" value="Hsp_70_fam"/>
</dbReference>
<dbReference type="PANTHER" id="PTHR45639">
    <property type="entry name" value="HSC70CB, ISOFORM G-RELATED"/>
    <property type="match status" value="1"/>
</dbReference>
<dbReference type="PANTHER" id="PTHR45639:SF3">
    <property type="entry name" value="HYPOXIA UP-REGULATED PROTEIN 1"/>
    <property type="match status" value="1"/>
</dbReference>
<dbReference type="Pfam" id="PF00012">
    <property type="entry name" value="HSP70"/>
    <property type="match status" value="1"/>
</dbReference>
<dbReference type="PRINTS" id="PR00301">
    <property type="entry name" value="HEATSHOCK70"/>
</dbReference>
<dbReference type="SUPFAM" id="SSF53067">
    <property type="entry name" value="Actin-like ATPase domain"/>
    <property type="match status" value="2"/>
</dbReference>
<dbReference type="PROSITE" id="PS01036">
    <property type="entry name" value="HSP70_3"/>
    <property type="match status" value="1"/>
</dbReference>
<proteinExistence type="evidence at protein level"/>
<protein>
    <recommendedName>
        <fullName>Hypoxia up-regulated protein 1</fullName>
    </recommendedName>
</protein>